<name>KLDC1_ARTBC</name>
<dbReference type="EMBL" id="ABSU01000018">
    <property type="protein sequence ID" value="EFE31977.1"/>
    <property type="molecule type" value="Genomic_DNA"/>
</dbReference>
<dbReference type="RefSeq" id="XP_003012617.1">
    <property type="nucleotide sequence ID" value="XM_003012571.1"/>
</dbReference>
<dbReference type="SMR" id="D4AYG1"/>
<dbReference type="STRING" id="663331.D4AYG1"/>
<dbReference type="GeneID" id="9522694"/>
<dbReference type="KEGG" id="abe:ARB_01230"/>
<dbReference type="eggNOG" id="KOG0379">
    <property type="taxonomic scope" value="Eukaryota"/>
</dbReference>
<dbReference type="HOGENOM" id="CLU_012508_0_0_1"/>
<dbReference type="OMA" id="ATFTQMN"/>
<dbReference type="Proteomes" id="UP000008866">
    <property type="component" value="Unassembled WGS sequence"/>
</dbReference>
<dbReference type="GO" id="GO:0005576">
    <property type="term" value="C:extracellular region"/>
    <property type="evidence" value="ECO:0007669"/>
    <property type="project" value="UniProtKB-SubCell"/>
</dbReference>
<dbReference type="GO" id="GO:0016020">
    <property type="term" value="C:membrane"/>
    <property type="evidence" value="ECO:0007669"/>
    <property type="project" value="UniProtKB-SubCell"/>
</dbReference>
<dbReference type="Gene3D" id="2.120.10.80">
    <property type="entry name" value="Kelch-type beta propeller"/>
    <property type="match status" value="2"/>
</dbReference>
<dbReference type="InterPro" id="IPR011043">
    <property type="entry name" value="Gal_Oxase/kelch_b-propeller"/>
</dbReference>
<dbReference type="InterPro" id="IPR015915">
    <property type="entry name" value="Kelch-typ_b-propeller"/>
</dbReference>
<dbReference type="PANTHER" id="PTHR46093">
    <property type="entry name" value="ACYL-COA-BINDING DOMAIN-CONTAINING PROTEIN 5"/>
    <property type="match status" value="1"/>
</dbReference>
<dbReference type="PANTHER" id="PTHR46093:SF18">
    <property type="entry name" value="FIBRONECTIN TYPE-III DOMAIN-CONTAINING PROTEIN"/>
    <property type="match status" value="1"/>
</dbReference>
<dbReference type="Pfam" id="PF24681">
    <property type="entry name" value="Kelch_KLHDC2_KLHL20_DRC7"/>
    <property type="match status" value="1"/>
</dbReference>
<dbReference type="SUPFAM" id="SSF50965">
    <property type="entry name" value="Galactose oxidase, central domain"/>
    <property type="match status" value="1"/>
</dbReference>
<feature type="signal peptide" evidence="1">
    <location>
        <begin position="1"/>
        <end position="32"/>
    </location>
</feature>
<feature type="chain" id="PRO_0000434930" description="Kelch repeat-containing protein ARB_01230">
    <location>
        <begin position="33"/>
        <end position="668"/>
    </location>
</feature>
<feature type="topological domain" description="Extracellular" evidence="5">
    <location>
        <begin position="33"/>
        <end position="522"/>
    </location>
</feature>
<feature type="transmembrane region" description="Helical" evidence="1">
    <location>
        <begin position="523"/>
        <end position="543"/>
    </location>
</feature>
<feature type="topological domain" description="Cytoplasmic" evidence="5">
    <location>
        <begin position="544"/>
        <end position="668"/>
    </location>
</feature>
<feature type="repeat" description="Kelch 1" evidence="1">
    <location>
        <begin position="62"/>
        <end position="108"/>
    </location>
</feature>
<feature type="repeat" description="Kelch 2" evidence="1">
    <location>
        <begin position="125"/>
        <end position="176"/>
    </location>
</feature>
<feature type="repeat" description="Kelch 3" evidence="1">
    <location>
        <begin position="283"/>
        <end position="331"/>
    </location>
</feature>
<feature type="repeat" description="Kelch 4" evidence="1">
    <location>
        <begin position="340"/>
        <end position="395"/>
    </location>
</feature>
<feature type="repeat" description="Kelch 5" evidence="1">
    <location>
        <begin position="396"/>
        <end position="445"/>
    </location>
</feature>
<feature type="repeat" description="Kelch 6" evidence="1">
    <location>
        <begin position="463"/>
        <end position="509"/>
    </location>
</feature>
<feature type="region of interest" description="Disordered" evidence="3">
    <location>
        <begin position="611"/>
        <end position="642"/>
    </location>
</feature>
<feature type="glycosylation site" description="N-linked (GlcNAc...) asparagine" evidence="2">
    <location>
        <position position="60"/>
    </location>
</feature>
<feature type="glycosylation site" description="N-linked (GlcNAc...) asparagine" evidence="2">
    <location>
        <position position="251"/>
    </location>
</feature>
<feature type="glycosylation site" description="N-linked (GlcNAc...) asparagine" evidence="2">
    <location>
        <position position="291"/>
    </location>
</feature>
<evidence type="ECO:0000255" key="1"/>
<evidence type="ECO:0000255" key="2">
    <source>
        <dbReference type="PROSITE-ProRule" id="PRU00498"/>
    </source>
</evidence>
<evidence type="ECO:0000256" key="3">
    <source>
        <dbReference type="SAM" id="MobiDB-lite"/>
    </source>
</evidence>
<evidence type="ECO:0000269" key="4">
    <source>
    </source>
</evidence>
<evidence type="ECO:0000305" key="5"/>
<accession>D4AYG1</accession>
<gene>
    <name type="ORF">ARB_01230</name>
</gene>
<sequence>MEVGRFASKSASMTYLLLVLLVGFILPQQGQHAHARTLARRDNSPTDICKRWSQQTAIVNGTLYIYGGRSTTDASQKDNTWNDNFLTLDLKSSWGISAPKLTGLPRGDNGPPPVSNGYLWNSFSSLFLYGGEFSDNPATEPVDFSLWEYSIPSSSWIEHKSPKTSSGENSAEANIPVQRSAEGAGINVPDLGRGWYFGGHLDGYTTKGWSQSIPRVYLKSMIEYTFPGHTNNGVKINTDDKRAGPEGVWRNITEGGLQDSAGFTERADGVLVYIPGFGKEGIILGLAGGTNATFTQMNVIDVFDIASSKWYKQATSGKTPKIRVNPCAVAASAADGSSTQVYLFGGQNLIPYGEQIQYNDMWILSIPSFTWIEAKTDGQSVPPARAGHTCNIWNSQIVVTGGYVGQDLSCDSPGIYVFDASELTWKNQYTALEGGNDLNQQASQTRDSSGLGGSYGYRVPKVVQSVIGGDETGKATQTVPAVAPTDGPLATGQPLTYTVLPTAGSGPHAGSPGSGSDGPNIAAIVAGVIAGCLGVLAIYLGFVTWLYRRRLAIYKSHLAATQRSSIGSYGDKISSFPPRYSDHMSSSGLGTTGSTGNLTVTTARMSWISGDNQRHNHTRSSSGGNFDHLAQPERPSTSSSVEDLLAGQEPTFLGVMLNPRQTLRVINQ</sequence>
<organism>
    <name type="scientific">Arthroderma benhamiae (strain ATCC MYA-4681 / CBS 112371)</name>
    <name type="common">Trichophyton mentagrophytes</name>
    <dbReference type="NCBI Taxonomy" id="663331"/>
    <lineage>
        <taxon>Eukaryota</taxon>
        <taxon>Fungi</taxon>
        <taxon>Dikarya</taxon>
        <taxon>Ascomycota</taxon>
        <taxon>Pezizomycotina</taxon>
        <taxon>Eurotiomycetes</taxon>
        <taxon>Eurotiomycetidae</taxon>
        <taxon>Onygenales</taxon>
        <taxon>Arthrodermataceae</taxon>
        <taxon>Trichophyton</taxon>
    </lineage>
</organism>
<comment type="subcellular location">
    <subcellularLocation>
        <location evidence="1">Membrane</location>
        <topology evidence="1">Single-pass membrane protein</topology>
    </subcellularLocation>
    <subcellularLocation>
        <location evidence="4">Secreted</location>
    </subcellularLocation>
</comment>
<proteinExistence type="evidence at protein level"/>
<reference key="1">
    <citation type="journal article" date="2011" name="Genome Biol.">
        <title>Comparative and functional genomics provide insights into the pathogenicity of dermatophytic fungi.</title>
        <authorList>
            <person name="Burmester A."/>
            <person name="Shelest E."/>
            <person name="Gloeckner G."/>
            <person name="Heddergott C."/>
            <person name="Schindler S."/>
            <person name="Staib P."/>
            <person name="Heidel A."/>
            <person name="Felder M."/>
            <person name="Petzold A."/>
            <person name="Szafranski K."/>
            <person name="Feuermann M."/>
            <person name="Pedruzzi I."/>
            <person name="Priebe S."/>
            <person name="Groth M."/>
            <person name="Winkler R."/>
            <person name="Li W."/>
            <person name="Kniemeyer O."/>
            <person name="Schroeckh V."/>
            <person name="Hertweck C."/>
            <person name="Hube B."/>
            <person name="White T.C."/>
            <person name="Platzer M."/>
            <person name="Guthke R."/>
            <person name="Heitman J."/>
            <person name="Woestemeyer J."/>
            <person name="Zipfel P.F."/>
            <person name="Monod M."/>
            <person name="Brakhage A.A."/>
        </authorList>
    </citation>
    <scope>NUCLEOTIDE SEQUENCE [LARGE SCALE GENOMIC DNA]</scope>
    <source>
        <strain>ATCC MYA-4681 / CBS 112371</strain>
    </source>
</reference>
<reference key="2">
    <citation type="journal article" date="2011" name="Proteomics">
        <title>Identification of novel secreted proteases during extracellular proteolysis by dermatophytes at acidic pH.</title>
        <authorList>
            <person name="Sriranganadane D."/>
            <person name="Waridel P."/>
            <person name="Salamin K."/>
            <person name="Feuermann M."/>
            <person name="Mignon B."/>
            <person name="Staib P."/>
            <person name="Neuhaus J.M."/>
            <person name="Quadroni M."/>
            <person name="Monod M."/>
        </authorList>
    </citation>
    <scope>IDENTIFICATION BY MASS SPECTROMETRY</scope>
    <scope>SUBCELLULAR LOCATION</scope>
</reference>
<protein>
    <recommendedName>
        <fullName>Kelch repeat-containing protein ARB_01230</fullName>
    </recommendedName>
</protein>
<keyword id="KW-0325">Glycoprotein</keyword>
<keyword id="KW-0880">Kelch repeat</keyword>
<keyword id="KW-0472">Membrane</keyword>
<keyword id="KW-1185">Reference proteome</keyword>
<keyword id="KW-0677">Repeat</keyword>
<keyword id="KW-0964">Secreted</keyword>
<keyword id="KW-0732">Signal</keyword>
<keyword id="KW-0812">Transmembrane</keyword>
<keyword id="KW-1133">Transmembrane helix</keyword>